<proteinExistence type="predicted"/>
<accession>P25981</accession>
<evidence type="ECO:0000255" key="1">
    <source>
        <dbReference type="PROSITE-ProRule" id="PRU00716"/>
    </source>
</evidence>
<sequence length="296" mass="32445">MYKIVSKKELTNNIFSMDIEAPRVAKSAKPGQFIIIKNDEKGERIPLTIADYDQEKGTVTIVFQTVGKGTKQLAAFNEGDHVADFVGPLGVPSEFIHEDIEELKKKNFIFVAGGVGAAPVYPQVKWMHEHGIAVDVILGSRNKDLLIYEEKLNKAAGNLYVTTDDGSYEFKGTGSDMLKELVNNQGKKYDHAIIIGPMIMMKFTSMLTKELGIPTTVSLNPIMVDGTGMCGACRVTVGGEVKFACVDGPEFDGHLVNYDESMRRQAMYKTEEGKAQLEVEEGNTHSHGGCGCRGDK</sequence>
<reference key="1">
    <citation type="submission" date="1999-09" db="EMBL/GenBank/DDBJ databases">
        <title>Cloning and sequence analysis of a gene encoding a medium-chain zinc-containing alcohol dehydrogenase from the Gram-positive anaerobe Clostridium beijerinckii NRRL B593.</title>
        <authorList>
            <person name="Rifaat M.M."/>
            <person name="Chen J.S."/>
        </authorList>
    </citation>
    <scope>NUCLEOTIDE SEQUENCE [GENOMIC DNA]</scope>
    <source>
        <strain>NRRL B-593</strain>
    </source>
</reference>
<dbReference type="EMBL" id="AF157307">
    <property type="protein sequence ID" value="AAA23200.2"/>
    <property type="molecule type" value="Genomic_DNA"/>
</dbReference>
<dbReference type="SMR" id="P25981"/>
<dbReference type="STRING" id="1520.LF65_00736"/>
<dbReference type="GO" id="GO:0051537">
    <property type="term" value="F:2 iron, 2 sulfur cluster binding"/>
    <property type="evidence" value="ECO:0007669"/>
    <property type="project" value="InterPro"/>
</dbReference>
<dbReference type="GO" id="GO:0050660">
    <property type="term" value="F:flavin adenine dinucleotide binding"/>
    <property type="evidence" value="ECO:0007669"/>
    <property type="project" value="InterPro"/>
</dbReference>
<dbReference type="GO" id="GO:0016491">
    <property type="term" value="F:oxidoreductase activity"/>
    <property type="evidence" value="ECO:0007669"/>
    <property type="project" value="InterPro"/>
</dbReference>
<dbReference type="GO" id="GO:0006221">
    <property type="term" value="P:pyrimidine nucleotide biosynthetic process"/>
    <property type="evidence" value="ECO:0007669"/>
    <property type="project" value="InterPro"/>
</dbReference>
<dbReference type="CDD" id="cd06219">
    <property type="entry name" value="DHOD_e_trans_like1"/>
    <property type="match status" value="1"/>
</dbReference>
<dbReference type="Gene3D" id="3.40.50.80">
    <property type="entry name" value="Nucleotide-binding domain of ferredoxin-NADP reductase (FNR) module"/>
    <property type="match status" value="1"/>
</dbReference>
<dbReference type="Gene3D" id="2.40.30.10">
    <property type="entry name" value="Translation factors"/>
    <property type="match status" value="1"/>
</dbReference>
<dbReference type="InterPro" id="IPR012165">
    <property type="entry name" value="Cyt_c3_hydrogenase_gsu"/>
</dbReference>
<dbReference type="InterPro" id="IPR019480">
    <property type="entry name" value="Dihydroorotate_DH_Fe-S-bd"/>
</dbReference>
<dbReference type="InterPro" id="IPR017927">
    <property type="entry name" value="FAD-bd_FR_type"/>
</dbReference>
<dbReference type="InterPro" id="IPR039261">
    <property type="entry name" value="FNR_nucleotide-bd"/>
</dbReference>
<dbReference type="InterPro" id="IPR001433">
    <property type="entry name" value="OxRdtase_FAD/NAD-bd"/>
</dbReference>
<dbReference type="InterPro" id="IPR050353">
    <property type="entry name" value="PyrK_electron_transfer"/>
</dbReference>
<dbReference type="InterPro" id="IPR017938">
    <property type="entry name" value="Riboflavin_synthase-like_b-brl"/>
</dbReference>
<dbReference type="NCBIfam" id="NF004862">
    <property type="entry name" value="PRK06222.1"/>
    <property type="match status" value="1"/>
</dbReference>
<dbReference type="PANTHER" id="PTHR43513">
    <property type="entry name" value="DIHYDROOROTATE DEHYDROGENASE B (NAD(+)), ELECTRON TRANSFER SUBUNIT"/>
    <property type="match status" value="1"/>
</dbReference>
<dbReference type="PANTHER" id="PTHR43513:SF3">
    <property type="entry name" value="DIHYDROOROTATE DEHYDROGENASE B (NAD(+)), ELECTRON TRANSFER SUBUNIT-RELATED"/>
    <property type="match status" value="1"/>
</dbReference>
<dbReference type="Pfam" id="PF10418">
    <property type="entry name" value="DHODB_Fe-S_bind"/>
    <property type="match status" value="1"/>
</dbReference>
<dbReference type="Pfam" id="PF00175">
    <property type="entry name" value="NAD_binding_1"/>
    <property type="match status" value="1"/>
</dbReference>
<dbReference type="PIRSF" id="PIRSF006816">
    <property type="entry name" value="Cyc3_hyd_g"/>
    <property type="match status" value="1"/>
</dbReference>
<dbReference type="SUPFAM" id="SSF52343">
    <property type="entry name" value="Ferredoxin reductase-like, C-terminal NADP-linked domain"/>
    <property type="match status" value="1"/>
</dbReference>
<dbReference type="SUPFAM" id="SSF63380">
    <property type="entry name" value="Riboflavin synthase domain-like"/>
    <property type="match status" value="1"/>
</dbReference>
<dbReference type="PROSITE" id="PS51384">
    <property type="entry name" value="FAD_FR"/>
    <property type="match status" value="1"/>
</dbReference>
<feature type="chain" id="PRO_0000066110" description="Uncharacterized protein in adh 3'region">
    <location>
        <begin position="1"/>
        <end position="296"/>
    </location>
</feature>
<feature type="domain" description="FAD-binding FR-type" evidence="1">
    <location>
        <begin position="1"/>
        <end position="95"/>
    </location>
</feature>
<protein>
    <recommendedName>
        <fullName>Uncharacterized protein in adh 3'region</fullName>
    </recommendedName>
</protein>
<organism>
    <name type="scientific">Clostridium beijerinckii</name>
    <name type="common">Clostridium MP</name>
    <dbReference type="NCBI Taxonomy" id="1520"/>
    <lineage>
        <taxon>Bacteria</taxon>
        <taxon>Bacillati</taxon>
        <taxon>Bacillota</taxon>
        <taxon>Clostridia</taxon>
        <taxon>Eubacteriales</taxon>
        <taxon>Clostridiaceae</taxon>
        <taxon>Clostridium</taxon>
    </lineage>
</organism>
<name>YADH_CLOBE</name>